<organism>
    <name type="scientific">Bos taurus</name>
    <name type="common">Bovine</name>
    <dbReference type="NCBI Taxonomy" id="9913"/>
    <lineage>
        <taxon>Eukaryota</taxon>
        <taxon>Metazoa</taxon>
        <taxon>Chordata</taxon>
        <taxon>Craniata</taxon>
        <taxon>Vertebrata</taxon>
        <taxon>Euteleostomi</taxon>
        <taxon>Mammalia</taxon>
        <taxon>Eutheria</taxon>
        <taxon>Laurasiatheria</taxon>
        <taxon>Artiodactyla</taxon>
        <taxon>Ruminantia</taxon>
        <taxon>Pecora</taxon>
        <taxon>Bovidae</taxon>
        <taxon>Bovinae</taxon>
        <taxon>Bos</taxon>
    </lineage>
</organism>
<comment type="function">
    <text evidence="2 3">Involved in regulation of mitochondrial membrane ATP synthase. Necessary for H(+) conduction of ATP synthase. Facilitates energy-driven catalysis of ATP synthesis by blocking a proton leak through an alternative proton exit pathway.</text>
</comment>
<comment type="subunit">
    <text evidence="3">Homotetramer. Associates with ATP synthase.</text>
</comment>
<comment type="subcellular location">
    <subcellularLocation>
        <location evidence="2">Mitochondrion</location>
    </subcellularLocation>
    <subcellularLocation>
        <location evidence="6">Mitochondrion inner membrane</location>
    </subcellularLocation>
</comment>
<comment type="similarity">
    <text evidence="5">Belongs to the ATP synthase subunit s family.</text>
</comment>
<keyword id="KW-0002">3D-structure</keyword>
<keyword id="KW-0066">ATP synthesis</keyword>
<keyword id="KW-0138">CF(0)</keyword>
<keyword id="KW-0903">Direct protein sequencing</keyword>
<keyword id="KW-0375">Hydrogen ion transport</keyword>
<keyword id="KW-0406">Ion transport</keyword>
<keyword id="KW-0433">Leucine-rich repeat</keyword>
<keyword id="KW-0460">Magnesium</keyword>
<keyword id="KW-0472">Membrane</keyword>
<keyword id="KW-0479">Metal-binding</keyword>
<keyword id="KW-0496">Mitochondrion</keyword>
<keyword id="KW-0999">Mitochondrion inner membrane</keyword>
<keyword id="KW-1185">Reference proteome</keyword>
<keyword id="KW-0677">Repeat</keyword>
<keyword id="KW-0809">Transit peptide</keyword>
<keyword id="KW-0813">Transport</keyword>
<proteinExistence type="evidence at protein level"/>
<sequence>MMLFGKISQQLCGLKKLPWSRDSRYFWGWLNAVFNKVDHDRIRDVGPDRAASEWLLRCGAMVRYHGQQRWQKDYNHLPTGPLDKYKIQAIDATDSCIMSIGFDHMEGLQYVEKIRLCKCHYIEDGCLERLSQLENLQKSMLEMEIISCGNVTDKGIIALHHFRNLKYLFLSDLPGVKEKEKIVQAFKTSLPSLELKLDLK</sequence>
<accession>P22027</accession>
<accession>Q32L55</accession>
<accession>Q5S3X8</accession>
<reference key="1">
    <citation type="journal article" date="2006" name="Arch. Biochem. Biophys.">
        <title>Bovine factor B: cloning, expression, and characterization.</title>
        <authorList>
            <person name="Belogrudov G.I."/>
        </authorList>
    </citation>
    <scope>NUCLEOTIDE SEQUENCE [MRNA]</scope>
</reference>
<reference key="2">
    <citation type="submission" date="2005-11" db="EMBL/GenBank/DDBJ databases">
        <authorList>
            <consortium name="NIH - Mammalian Gene Collection (MGC) project"/>
        </authorList>
    </citation>
    <scope>NUCLEOTIDE SEQUENCE [LARGE SCALE MRNA]</scope>
    <source>
        <strain>Crossbred X Angus</strain>
        <tissue>Liver</tissue>
    </source>
</reference>
<reference key="3">
    <citation type="journal article" date="1990" name="FEBS Lett.">
        <title>Amino-terminal amino acid sequence of beef heart mitochondrial coupling factor B.</title>
        <authorList>
            <person name="Kantham L."/>
            <person name="Raychowdhury R."/>
            <person name="Ogata K.K."/>
            <person name="Javed A."/>
            <person name="Rice J."/>
            <person name="Sanadi D.R."/>
        </authorList>
    </citation>
    <scope>PROTEIN SEQUENCE OF 26-80</scope>
    <source>
        <tissue>Heart</tissue>
    </source>
</reference>
<reference key="4">
    <citation type="journal article" date="2002" name="Arch. Biochem. Biophys.">
        <title>Factor B is essential for ATP synthesis by mitochondria.</title>
        <authorList>
            <person name="Belogrudov G.I."/>
        </authorList>
    </citation>
    <scope>FUNCTION</scope>
    <scope>ASSOCIATION WITH ATP SYNTHASE</scope>
    <scope>SUBCELLULAR LOCATION</scope>
</reference>
<reference evidence="7 8 9 10" key="5">
    <citation type="journal article" date="2008" name="Proc. Natl. Acad. Sci. U.S.A.">
        <title>Crystal structure of bovine mitochondrial factor B at 0.96-A resolution.</title>
        <authorList>
            <person name="Lee J.K."/>
            <person name="Belogrudov G.I."/>
            <person name="Stroud R.M."/>
        </authorList>
    </citation>
    <scope>X-RAY CRYSTALLOGRAPHY (0.96 ANGSTROMS) OF 26-200 OF MUTANT GLU-28</scope>
    <scope>FUNCTION</scope>
    <scope>MAGNESIUM-BINDING SITES</scope>
    <scope>LEUCINE-RICH REPEATS</scope>
    <scope>SUBUNIT</scope>
    <scope>SUBCELLULAR LOCATION</scope>
</reference>
<evidence type="ECO:0000250" key="1">
    <source>
        <dbReference type="UniProtKB" id="Q99766"/>
    </source>
</evidence>
<evidence type="ECO:0000269" key="2">
    <source>
    </source>
</evidence>
<evidence type="ECO:0000269" key="3">
    <source>
    </source>
</evidence>
<evidence type="ECO:0000269" key="4">
    <source>
    </source>
</evidence>
<evidence type="ECO:0000305" key="5"/>
<evidence type="ECO:0000305" key="6">
    <source>
    </source>
</evidence>
<evidence type="ECO:0007744" key="7">
    <source>
        <dbReference type="PDB" id="3DZE"/>
    </source>
</evidence>
<evidence type="ECO:0007744" key="8">
    <source>
        <dbReference type="PDB" id="3E2J"/>
    </source>
</evidence>
<evidence type="ECO:0007744" key="9">
    <source>
        <dbReference type="PDB" id="3E3Z"/>
    </source>
</evidence>
<evidence type="ECO:0007744" key="10">
    <source>
        <dbReference type="PDB" id="3E4G"/>
    </source>
</evidence>
<evidence type="ECO:0007829" key="11">
    <source>
        <dbReference type="PDB" id="3E4G"/>
    </source>
</evidence>
<dbReference type="EMBL" id="AY780292">
    <property type="protein sequence ID" value="AAV52866.1"/>
    <property type="molecule type" value="mRNA"/>
</dbReference>
<dbReference type="EMBL" id="BC109757">
    <property type="protein sequence ID" value="AAI09758.1"/>
    <property type="molecule type" value="mRNA"/>
</dbReference>
<dbReference type="PIR" id="S13005">
    <property type="entry name" value="S13005"/>
</dbReference>
<dbReference type="RefSeq" id="NP_001007813.1">
    <property type="nucleotide sequence ID" value="NM_001007812.3"/>
</dbReference>
<dbReference type="RefSeq" id="XP_010807544.1">
    <property type="nucleotide sequence ID" value="XM_010809242.2"/>
</dbReference>
<dbReference type="PDB" id="3DZE">
    <property type="method" value="X-ray"/>
    <property type="resolution" value="1.15 A"/>
    <property type="chains" value="A=26-200"/>
</dbReference>
<dbReference type="PDB" id="3E2J">
    <property type="method" value="X-ray"/>
    <property type="resolution" value="2.90 A"/>
    <property type="chains" value="A/B/C/D=26-200"/>
</dbReference>
<dbReference type="PDB" id="3E3Z">
    <property type="method" value="X-ray"/>
    <property type="resolution" value="1.70 A"/>
    <property type="chains" value="A=26-200"/>
</dbReference>
<dbReference type="PDB" id="3E4G">
    <property type="method" value="X-ray"/>
    <property type="resolution" value="0.96 A"/>
    <property type="chains" value="A=26-200"/>
</dbReference>
<dbReference type="PDBsum" id="3DZE"/>
<dbReference type="PDBsum" id="3E2J"/>
<dbReference type="PDBsum" id="3E3Z"/>
<dbReference type="PDBsum" id="3E4G"/>
<dbReference type="SMR" id="P22027"/>
<dbReference type="DIP" id="DIP-46291N"/>
<dbReference type="FunCoup" id="P22027">
    <property type="interactions" value="1229"/>
</dbReference>
<dbReference type="STRING" id="9913.ENSBTAP00000060234"/>
<dbReference type="PaxDb" id="9913-ENSBTAP00000020228"/>
<dbReference type="GeneID" id="493709"/>
<dbReference type="KEGG" id="bta:493709"/>
<dbReference type="CTD" id="27109"/>
<dbReference type="VEuPathDB" id="HostDB:ENSBTAG00000015202"/>
<dbReference type="eggNOG" id="KOG3864">
    <property type="taxonomic scope" value="Eukaryota"/>
</dbReference>
<dbReference type="HOGENOM" id="CLU_100746_0_0_1"/>
<dbReference type="InParanoid" id="P22027"/>
<dbReference type="OMA" id="IFDMLYV"/>
<dbReference type="OrthoDB" id="5859291at2759"/>
<dbReference type="TreeFam" id="TF315274"/>
<dbReference type="Reactome" id="R-BTA-163210">
    <property type="pathway name" value="Formation of ATP by chemiosmotic coupling"/>
</dbReference>
<dbReference type="Reactome" id="R-BTA-8949613">
    <property type="pathway name" value="Cristae formation"/>
</dbReference>
<dbReference type="EvolutionaryTrace" id="P22027"/>
<dbReference type="Proteomes" id="UP000009136">
    <property type="component" value="Chromosome 10"/>
</dbReference>
<dbReference type="Bgee" id="ENSBTAG00000015202">
    <property type="expression patterns" value="Expressed in biceps femoris and 107 other cell types or tissues"/>
</dbReference>
<dbReference type="GO" id="GO:0005737">
    <property type="term" value="C:cytoplasm"/>
    <property type="evidence" value="ECO:0000318"/>
    <property type="project" value="GO_Central"/>
</dbReference>
<dbReference type="GO" id="GO:0005743">
    <property type="term" value="C:mitochondrial inner membrane"/>
    <property type="evidence" value="ECO:0007669"/>
    <property type="project" value="UniProtKB-SubCell"/>
</dbReference>
<dbReference type="GO" id="GO:0045259">
    <property type="term" value="C:proton-transporting ATP synthase complex"/>
    <property type="evidence" value="ECO:0007669"/>
    <property type="project" value="UniProtKB-KW"/>
</dbReference>
<dbReference type="GO" id="GO:0046872">
    <property type="term" value="F:metal ion binding"/>
    <property type="evidence" value="ECO:0007669"/>
    <property type="project" value="UniProtKB-KW"/>
</dbReference>
<dbReference type="GO" id="GO:0006754">
    <property type="term" value="P:ATP biosynthetic process"/>
    <property type="evidence" value="ECO:0007669"/>
    <property type="project" value="UniProtKB-KW"/>
</dbReference>
<dbReference type="GO" id="GO:1902600">
    <property type="term" value="P:proton transmembrane transport"/>
    <property type="evidence" value="ECO:0007669"/>
    <property type="project" value="UniProtKB-KW"/>
</dbReference>
<dbReference type="FunFam" id="3.80.10.10:FF:000216">
    <property type="entry name" value="ATP synthase subunit s, mitochondrial isoform X1"/>
    <property type="match status" value="1"/>
</dbReference>
<dbReference type="Gene3D" id="3.80.10.10">
    <property type="entry name" value="Ribonuclease Inhibitor"/>
    <property type="match status" value="1"/>
</dbReference>
<dbReference type="InterPro" id="IPR032675">
    <property type="entry name" value="LRR_dom_sf"/>
</dbReference>
<dbReference type="SUPFAM" id="SSF52047">
    <property type="entry name" value="RNI-like"/>
    <property type="match status" value="1"/>
</dbReference>
<protein>
    <recommendedName>
        <fullName>ATP synthase subunit s, mitochondrial</fullName>
    </recommendedName>
    <alternativeName>
        <fullName>ATP synthase-coupling factor B</fullName>
        <shortName>FB</shortName>
    </alternativeName>
    <alternativeName>
        <fullName evidence="1">Distal membrane arm assembly complex 2-like protein</fullName>
    </alternativeName>
    <alternativeName>
        <fullName>Mitochondrial ATP synthase regulatory component factor B</fullName>
    </alternativeName>
</protein>
<gene>
    <name type="primary">DMAC2L</name>
    <name type="synonym">ATP5S</name>
    <name type="synonym">ATPW</name>
</gene>
<feature type="transit peptide" description="Mitochondrion" evidence="4">
    <location>
        <begin position="1"/>
        <end position="25"/>
    </location>
</feature>
<feature type="chain" id="PRO_0000002537" description="ATP synthase subunit s, mitochondrial">
    <location>
        <begin position="26"/>
        <end position="200"/>
    </location>
</feature>
<feature type="repeat" description="LRR 1" evidence="3">
    <location>
        <begin position="62"/>
        <end position="87"/>
    </location>
</feature>
<feature type="repeat" description="LRR 2" evidence="3">
    <location>
        <begin position="88"/>
        <end position="116"/>
    </location>
</feature>
<feature type="repeat" description="LRR 3" evidence="3">
    <location>
        <begin position="117"/>
        <end position="141"/>
    </location>
</feature>
<feature type="repeat" description="LRR 4" evidence="3">
    <location>
        <begin position="142"/>
        <end position="173"/>
    </location>
</feature>
<feature type="region of interest" description="N-terminal domain" evidence="3">
    <location>
        <begin position="1"/>
        <end position="61"/>
    </location>
</feature>
<feature type="binding site" evidence="3 8">
    <location>
        <position position="59"/>
    </location>
    <ligand>
        <name>Mg(2+)</name>
        <dbReference type="ChEBI" id="CHEBI:18420"/>
    </ligand>
</feature>
<feature type="binding site" evidence="3 8">
    <location>
        <position position="93"/>
    </location>
    <ligand>
        <name>Mg(2+)</name>
        <dbReference type="ChEBI" id="CHEBI:18420"/>
    </ligand>
</feature>
<feature type="sequence variant" description="In one third of the chains.">
    <location>
        <position position="26"/>
    </location>
</feature>
<feature type="sequence conflict" description="In Ref. 3; AA sequence." evidence="5" ref="3">
    <original>C</original>
    <variation>G</variation>
    <location>
        <position position="58"/>
    </location>
</feature>
<feature type="helix" evidence="11">
    <location>
        <begin position="26"/>
        <end position="35"/>
    </location>
</feature>
<feature type="helix" evidence="11">
    <location>
        <begin position="39"/>
        <end position="45"/>
    </location>
</feature>
<feature type="helix" evidence="11">
    <location>
        <begin position="47"/>
        <end position="57"/>
    </location>
</feature>
<feature type="strand" evidence="11">
    <location>
        <begin position="61"/>
        <end position="64"/>
    </location>
</feature>
<feature type="helix" evidence="11">
    <location>
        <begin position="74"/>
        <end position="76"/>
    </location>
</feature>
<feature type="strand" evidence="11">
    <location>
        <begin position="87"/>
        <end position="94"/>
    </location>
</feature>
<feature type="helix" evidence="11">
    <location>
        <begin position="99"/>
        <end position="105"/>
    </location>
</feature>
<feature type="strand" evidence="11">
    <location>
        <begin position="113"/>
        <end position="118"/>
    </location>
</feature>
<feature type="helix" evidence="11">
    <location>
        <begin position="124"/>
        <end position="131"/>
    </location>
</feature>
<feature type="helix" evidence="11">
    <location>
        <begin position="134"/>
        <end position="139"/>
    </location>
</feature>
<feature type="strand" evidence="11">
    <location>
        <begin position="142"/>
        <end position="147"/>
    </location>
</feature>
<feature type="helix" evidence="11">
    <location>
        <begin position="153"/>
        <end position="158"/>
    </location>
</feature>
<feature type="helix" evidence="11">
    <location>
        <begin position="159"/>
        <end position="161"/>
    </location>
</feature>
<feature type="strand" evidence="11">
    <location>
        <begin position="167"/>
        <end position="172"/>
    </location>
</feature>
<feature type="helix" evidence="11">
    <location>
        <begin position="179"/>
        <end position="189"/>
    </location>
</feature>
<feature type="strand" evidence="11">
    <location>
        <begin position="194"/>
        <end position="198"/>
    </location>
</feature>
<name>ATP5S_BOVIN</name>